<reference key="1">
    <citation type="journal article" date="2008" name="Mol. Cell. Proteomics">
        <title>Evolution of an arsenal: structural and functional diversification of the venom system in the advanced snakes (Caenophidia).</title>
        <authorList>
            <person name="Fry B.G."/>
            <person name="Scheib H."/>
            <person name="van der Weerd L."/>
            <person name="Young B."/>
            <person name="McNaughtan J."/>
            <person name="Ramjan S.F.R."/>
            <person name="Vidal N."/>
            <person name="Poelmann R.E."/>
            <person name="Norman J.A."/>
        </authorList>
    </citation>
    <scope>NUCLEOTIDE SEQUENCE [MRNA]</scope>
    <source>
        <tissue>Venom gland</tissue>
    </source>
</reference>
<name>LECM1_PHIOL</name>
<proteinExistence type="evidence at transcript level"/>
<sequence length="156" mass="18275">MGRFIFVSLGLLVLAFSLSGIGADQHCPSGWFSHNVSCYKLINDWKTWDEAQRFCMDEQENGQLASINDVGESVKLSDEISKTWSIIDVWIGLRLSKRKSIWEWIDGSNVTQTRWEEGEPNNFLKKEFCVVLTSRSRYLKWNDKDCNRRHRFLCKF</sequence>
<feature type="signal peptide" evidence="2">
    <location>
        <begin position="1"/>
        <end position="23"/>
    </location>
</feature>
<feature type="chain" id="PRO_0000355285" description="C-type lectin lectoxin-Phi1">
    <location>
        <begin position="24"/>
        <end position="156"/>
    </location>
</feature>
<feature type="domain" description="C-type lectin" evidence="3">
    <location>
        <begin position="34"/>
        <end position="155"/>
    </location>
</feature>
<feature type="short sequence motif" description="Mannose-binding">
    <location>
        <begin position="119"/>
        <end position="121"/>
    </location>
</feature>
<feature type="binding site" evidence="1">
    <location>
        <position position="127"/>
    </location>
    <ligand>
        <name>Ca(2+)</name>
        <dbReference type="ChEBI" id="CHEBI:29108"/>
    </ligand>
</feature>
<feature type="binding site" evidence="1">
    <location>
        <position position="142"/>
    </location>
    <ligand>
        <name>Ca(2+)</name>
        <dbReference type="ChEBI" id="CHEBI:29108"/>
    </ligand>
</feature>
<feature type="binding site" evidence="1">
    <location>
        <position position="143"/>
    </location>
    <ligand>
        <name>Ca(2+)</name>
        <dbReference type="ChEBI" id="CHEBI:29108"/>
    </ligand>
</feature>
<feature type="glycosylation site" description="N-linked (GlcNAc...) asparagine" evidence="2">
    <location>
        <position position="35"/>
    </location>
</feature>
<feature type="glycosylation site" description="N-linked (GlcNAc...) asparagine" evidence="2">
    <location>
        <position position="109"/>
    </location>
</feature>
<feature type="disulfide bond" evidence="3">
    <location>
        <begin position="27"/>
        <end position="38"/>
    </location>
</feature>
<feature type="disulfide bond" evidence="3">
    <location>
        <begin position="55"/>
        <end position="154"/>
    </location>
</feature>
<feature type="disulfide bond" evidence="3">
    <location>
        <begin position="129"/>
        <end position="146"/>
    </location>
</feature>
<protein>
    <recommendedName>
        <fullName>C-type lectin lectoxin-Phi1</fullName>
        <shortName>CTL</shortName>
    </recommendedName>
</protein>
<dbReference type="EMBL" id="EU029700">
    <property type="protein sequence ID" value="ABU68500.1"/>
    <property type="molecule type" value="mRNA"/>
</dbReference>
<dbReference type="SMR" id="A7X406"/>
<dbReference type="GO" id="GO:0005576">
    <property type="term" value="C:extracellular region"/>
    <property type="evidence" value="ECO:0007669"/>
    <property type="project" value="UniProtKB-SubCell"/>
</dbReference>
<dbReference type="GO" id="GO:0030246">
    <property type="term" value="F:carbohydrate binding"/>
    <property type="evidence" value="ECO:0007669"/>
    <property type="project" value="UniProtKB-KW"/>
</dbReference>
<dbReference type="GO" id="GO:0046872">
    <property type="term" value="F:metal ion binding"/>
    <property type="evidence" value="ECO:0007669"/>
    <property type="project" value="UniProtKB-KW"/>
</dbReference>
<dbReference type="Gene3D" id="3.10.100.10">
    <property type="entry name" value="Mannose-Binding Protein A, subunit A"/>
    <property type="match status" value="1"/>
</dbReference>
<dbReference type="InterPro" id="IPR001304">
    <property type="entry name" value="C-type_lectin-like"/>
</dbReference>
<dbReference type="InterPro" id="IPR016186">
    <property type="entry name" value="C-type_lectin-like/link_sf"/>
</dbReference>
<dbReference type="InterPro" id="IPR050111">
    <property type="entry name" value="C-type_lectin/snaclec_domain"/>
</dbReference>
<dbReference type="InterPro" id="IPR018378">
    <property type="entry name" value="C-type_lectin_CS"/>
</dbReference>
<dbReference type="InterPro" id="IPR016187">
    <property type="entry name" value="CTDL_fold"/>
</dbReference>
<dbReference type="PANTHER" id="PTHR22803">
    <property type="entry name" value="MANNOSE, PHOSPHOLIPASE, LECTIN RECEPTOR RELATED"/>
    <property type="match status" value="1"/>
</dbReference>
<dbReference type="Pfam" id="PF00059">
    <property type="entry name" value="Lectin_C"/>
    <property type="match status" value="1"/>
</dbReference>
<dbReference type="PRINTS" id="PR01504">
    <property type="entry name" value="PNCREATITSAP"/>
</dbReference>
<dbReference type="SMART" id="SM00034">
    <property type="entry name" value="CLECT"/>
    <property type="match status" value="1"/>
</dbReference>
<dbReference type="SUPFAM" id="SSF56436">
    <property type="entry name" value="C-type lectin-like"/>
    <property type="match status" value="1"/>
</dbReference>
<dbReference type="PROSITE" id="PS00615">
    <property type="entry name" value="C_TYPE_LECTIN_1"/>
    <property type="match status" value="1"/>
</dbReference>
<dbReference type="PROSITE" id="PS50041">
    <property type="entry name" value="C_TYPE_LECTIN_2"/>
    <property type="match status" value="1"/>
</dbReference>
<accession>A7X406</accession>
<keyword id="KW-0106">Calcium</keyword>
<keyword id="KW-1015">Disulfide bond</keyword>
<keyword id="KW-0325">Glycoprotein</keyword>
<keyword id="KW-0430">Lectin</keyword>
<keyword id="KW-0479">Metal-binding</keyword>
<keyword id="KW-0964">Secreted</keyword>
<keyword id="KW-0732">Signal</keyword>
<evidence type="ECO:0000250" key="1"/>
<evidence type="ECO:0000255" key="2"/>
<evidence type="ECO:0000255" key="3">
    <source>
        <dbReference type="PROSITE-ProRule" id="PRU00040"/>
    </source>
</evidence>
<evidence type="ECO:0000305" key="4"/>
<comment type="function">
    <text evidence="1">Mannose-binding lectin which recognizes specific carbohydrate structures and agglutinates a variety of animal cells by binding to cell-surface glycoproteins and glycolipids. May be a calcium-dependent lectin (By similarity).</text>
</comment>
<comment type="subcellular location">
    <subcellularLocation>
        <location evidence="1">Secreted</location>
    </subcellularLocation>
</comment>
<comment type="tissue specificity">
    <text>Expressed by the venom gland.</text>
</comment>
<comment type="similarity">
    <text evidence="4">Belongs to the true venom lectin family.</text>
</comment>
<organism>
    <name type="scientific">Philodryas olfersii</name>
    <name type="common">Green snake</name>
    <dbReference type="NCBI Taxonomy" id="120305"/>
    <lineage>
        <taxon>Eukaryota</taxon>
        <taxon>Metazoa</taxon>
        <taxon>Chordata</taxon>
        <taxon>Craniata</taxon>
        <taxon>Vertebrata</taxon>
        <taxon>Euteleostomi</taxon>
        <taxon>Lepidosauria</taxon>
        <taxon>Squamata</taxon>
        <taxon>Bifurcata</taxon>
        <taxon>Unidentata</taxon>
        <taxon>Episquamata</taxon>
        <taxon>Toxicofera</taxon>
        <taxon>Serpentes</taxon>
        <taxon>Colubroidea</taxon>
        <taxon>Dipsadidae</taxon>
        <taxon>Philodryas</taxon>
    </lineage>
</organism>